<organism>
    <name type="scientific">Mus musculus</name>
    <name type="common">Mouse</name>
    <dbReference type="NCBI Taxonomy" id="10090"/>
    <lineage>
        <taxon>Eukaryota</taxon>
        <taxon>Metazoa</taxon>
        <taxon>Chordata</taxon>
        <taxon>Craniata</taxon>
        <taxon>Vertebrata</taxon>
        <taxon>Euteleostomi</taxon>
        <taxon>Mammalia</taxon>
        <taxon>Eutheria</taxon>
        <taxon>Euarchontoglires</taxon>
        <taxon>Glires</taxon>
        <taxon>Rodentia</taxon>
        <taxon>Myomorpha</taxon>
        <taxon>Muroidea</taxon>
        <taxon>Muridae</taxon>
        <taxon>Murinae</taxon>
        <taxon>Mus</taxon>
        <taxon>Mus</taxon>
    </lineage>
</organism>
<keyword id="KW-0131">Cell cycle</keyword>
<keyword id="KW-0132">Cell division</keyword>
<keyword id="KW-0137">Centromere</keyword>
<keyword id="KW-0158">Chromosome</keyword>
<keyword id="KW-0963">Cytoplasm</keyword>
<keyword id="KW-0206">Cytoskeleton</keyword>
<keyword id="KW-0995">Kinetochore</keyword>
<keyword id="KW-0493">Microtubule</keyword>
<keyword id="KW-0498">Mitosis</keyword>
<keyword id="KW-1185">Reference proteome</keyword>
<accession>Q9CR46</accession>
<accession>B2KGY1</accession>
<feature type="chain" id="PRO_0000273161" description="SKA complex subunit 2">
    <location>
        <begin position="1"/>
        <end position="120"/>
    </location>
</feature>
<gene>
    <name type="primary">Ska2</name>
    <name type="synonym">Fam33a</name>
</gene>
<dbReference type="EMBL" id="AK003196">
    <property type="protein sequence ID" value="BAB22634.1"/>
    <property type="molecule type" value="mRNA"/>
</dbReference>
<dbReference type="EMBL" id="AK013317">
    <property type="protein sequence ID" value="BAB28787.1"/>
    <property type="molecule type" value="mRNA"/>
</dbReference>
<dbReference type="EMBL" id="AK013370">
    <property type="protein sequence ID" value="BAB28814.1"/>
    <property type="molecule type" value="mRNA"/>
</dbReference>
<dbReference type="EMBL" id="AK017811">
    <property type="protein sequence ID" value="BAB30948.1"/>
    <property type="molecule type" value="mRNA"/>
</dbReference>
<dbReference type="EMBL" id="AK162628">
    <property type="protein sequence ID" value="BAE36998.1"/>
    <property type="molecule type" value="mRNA"/>
</dbReference>
<dbReference type="EMBL" id="AL713917">
    <property type="status" value="NOT_ANNOTATED_CDS"/>
    <property type="molecule type" value="Genomic_DNA"/>
</dbReference>
<dbReference type="EMBL" id="CU468043">
    <property type="status" value="NOT_ANNOTATED_CDS"/>
    <property type="molecule type" value="Genomic_DNA"/>
</dbReference>
<dbReference type="EMBL" id="CH466556">
    <property type="protein sequence ID" value="EDL15809.1"/>
    <property type="molecule type" value="Genomic_DNA"/>
</dbReference>
<dbReference type="EMBL" id="BC117001">
    <property type="protein sequence ID" value="AAI17002.1"/>
    <property type="molecule type" value="mRNA"/>
</dbReference>
<dbReference type="EMBL" id="BC119167">
    <property type="protein sequence ID" value="AAI19168.1"/>
    <property type="molecule type" value="mRNA"/>
</dbReference>
<dbReference type="CCDS" id="CCDS25209.1"/>
<dbReference type="RefSeq" id="NP_079653.1">
    <property type="nucleotide sequence ID" value="NM_025377.3"/>
</dbReference>
<dbReference type="SMR" id="Q9CR46"/>
<dbReference type="BioGRID" id="211243">
    <property type="interactions" value="3"/>
</dbReference>
<dbReference type="ComplexPortal" id="CPX-5700">
    <property type="entry name" value="Kinetochore SKA complex"/>
</dbReference>
<dbReference type="FunCoup" id="Q9CR46">
    <property type="interactions" value="682"/>
</dbReference>
<dbReference type="IntAct" id="Q9CR46">
    <property type="interactions" value="1"/>
</dbReference>
<dbReference type="STRING" id="10090.ENSMUSP00000020794"/>
<dbReference type="GlyGen" id="Q9CR46">
    <property type="glycosylation" value="1 site, 1 O-linked glycan (1 site)"/>
</dbReference>
<dbReference type="PhosphoSitePlus" id="Q9CR46"/>
<dbReference type="PaxDb" id="10090-ENSMUSP00000020794"/>
<dbReference type="PeptideAtlas" id="Q9CR46"/>
<dbReference type="ProteomicsDB" id="261245"/>
<dbReference type="Pumba" id="Q9CR46"/>
<dbReference type="Antibodypedia" id="31070">
    <property type="antibodies" value="127 antibodies from 23 providers"/>
</dbReference>
<dbReference type="Ensembl" id="ENSMUST00000020794.6">
    <property type="protein sequence ID" value="ENSMUSP00000020794.6"/>
    <property type="gene ID" value="ENSMUSG00000020492.12"/>
</dbReference>
<dbReference type="GeneID" id="66140"/>
<dbReference type="KEGG" id="mmu:66140"/>
<dbReference type="UCSC" id="uc007kti.1">
    <property type="organism name" value="mouse"/>
</dbReference>
<dbReference type="AGR" id="MGI:1913390"/>
<dbReference type="CTD" id="348235"/>
<dbReference type="MGI" id="MGI:1913390">
    <property type="gene designation" value="Ska2"/>
</dbReference>
<dbReference type="VEuPathDB" id="HostDB:ENSMUSG00000020492"/>
<dbReference type="eggNOG" id="ENOG502S6SM">
    <property type="taxonomic scope" value="Eukaryota"/>
</dbReference>
<dbReference type="GeneTree" id="ENSGT00390000009588"/>
<dbReference type="HOGENOM" id="CLU_143881_0_0_1"/>
<dbReference type="InParanoid" id="Q9CR46"/>
<dbReference type="OMA" id="TNAQKES"/>
<dbReference type="OrthoDB" id="193920at2759"/>
<dbReference type="PhylomeDB" id="Q9CR46"/>
<dbReference type="TreeFam" id="TF332958"/>
<dbReference type="Reactome" id="R-MMU-141444">
    <property type="pathway name" value="Amplification of signal from unattached kinetochores via a MAD2 inhibitory signal"/>
</dbReference>
<dbReference type="Reactome" id="R-MMU-2467813">
    <property type="pathway name" value="Separation of Sister Chromatids"/>
</dbReference>
<dbReference type="Reactome" id="R-MMU-2500257">
    <property type="pathway name" value="Resolution of Sister Chromatid Cohesion"/>
</dbReference>
<dbReference type="Reactome" id="R-MMU-5663220">
    <property type="pathway name" value="RHO GTPases Activate Formins"/>
</dbReference>
<dbReference type="Reactome" id="R-MMU-68877">
    <property type="pathway name" value="Mitotic Prometaphase"/>
</dbReference>
<dbReference type="Reactome" id="R-MMU-9648025">
    <property type="pathway name" value="EML4 and NUDC in mitotic spindle formation"/>
</dbReference>
<dbReference type="BioGRID-ORCS" id="66140">
    <property type="hits" value="23 hits in 76 CRISPR screens"/>
</dbReference>
<dbReference type="ChiTaRS" id="Ska2">
    <property type="organism name" value="mouse"/>
</dbReference>
<dbReference type="PRO" id="PR:Q9CR46"/>
<dbReference type="Proteomes" id="UP000000589">
    <property type="component" value="Chromosome 11"/>
</dbReference>
<dbReference type="RNAct" id="Q9CR46">
    <property type="molecule type" value="protein"/>
</dbReference>
<dbReference type="Bgee" id="ENSMUSG00000020492">
    <property type="expression patterns" value="Expressed in rostral migratory stream and 260 other cell types or tissues"/>
</dbReference>
<dbReference type="GO" id="GO:0005813">
    <property type="term" value="C:centrosome"/>
    <property type="evidence" value="ECO:0007669"/>
    <property type="project" value="UniProtKB-SubCell"/>
</dbReference>
<dbReference type="GO" id="GO:0005737">
    <property type="term" value="C:cytoplasm"/>
    <property type="evidence" value="ECO:0007669"/>
    <property type="project" value="UniProtKB-KW"/>
</dbReference>
<dbReference type="GO" id="GO:0000776">
    <property type="term" value="C:kinetochore"/>
    <property type="evidence" value="ECO:0000303"/>
    <property type="project" value="ComplexPortal"/>
</dbReference>
<dbReference type="GO" id="GO:0072687">
    <property type="term" value="C:meiotic spindle"/>
    <property type="evidence" value="ECO:0000314"/>
    <property type="project" value="UniProtKB"/>
</dbReference>
<dbReference type="GO" id="GO:0000940">
    <property type="term" value="C:outer kinetochore"/>
    <property type="evidence" value="ECO:0000250"/>
    <property type="project" value="UniProtKB"/>
</dbReference>
<dbReference type="GO" id="GO:0170027">
    <property type="term" value="C:SKA complex"/>
    <property type="evidence" value="ECO:0007669"/>
    <property type="project" value="Ensembl"/>
</dbReference>
<dbReference type="GO" id="GO:0005876">
    <property type="term" value="C:spindle microtubule"/>
    <property type="evidence" value="ECO:0007669"/>
    <property type="project" value="Ensembl"/>
</dbReference>
<dbReference type="GO" id="GO:0008017">
    <property type="term" value="F:microtubule binding"/>
    <property type="evidence" value="ECO:0000250"/>
    <property type="project" value="UniProtKB"/>
</dbReference>
<dbReference type="GO" id="GO:0051315">
    <property type="term" value="P:attachment of mitotic spindle microtubules to kinetochore"/>
    <property type="evidence" value="ECO:0000250"/>
    <property type="project" value="UniProtKB"/>
</dbReference>
<dbReference type="GO" id="GO:0051301">
    <property type="term" value="P:cell division"/>
    <property type="evidence" value="ECO:0007669"/>
    <property type="project" value="UniProtKB-KW"/>
</dbReference>
<dbReference type="GO" id="GO:0051296">
    <property type="term" value="P:establishment of meiotic spindle orientation"/>
    <property type="evidence" value="ECO:0000315"/>
    <property type="project" value="UniProtKB"/>
</dbReference>
<dbReference type="GO" id="GO:0007080">
    <property type="term" value="P:mitotic metaphase chromosome alignment"/>
    <property type="evidence" value="ECO:0000250"/>
    <property type="project" value="UniProtKB"/>
</dbReference>
<dbReference type="GO" id="GO:0000070">
    <property type="term" value="P:mitotic sister chromatid segregation"/>
    <property type="evidence" value="ECO:0000250"/>
    <property type="project" value="UniProtKB"/>
</dbReference>
<dbReference type="GO" id="GO:0031110">
    <property type="term" value="P:regulation of microtubule polymerization or depolymerization"/>
    <property type="evidence" value="ECO:0000250"/>
    <property type="project" value="UniProtKB"/>
</dbReference>
<dbReference type="GO" id="GO:0007056">
    <property type="term" value="P:spindle assembly involved in female meiosis"/>
    <property type="evidence" value="ECO:0000315"/>
    <property type="project" value="UniProtKB"/>
</dbReference>
<dbReference type="Gene3D" id="6.10.250.1380">
    <property type="match status" value="1"/>
</dbReference>
<dbReference type="InterPro" id="IPR026762">
    <property type="entry name" value="Ska2"/>
</dbReference>
<dbReference type="InterPro" id="IPR042091">
    <property type="entry name" value="Ska2_N"/>
</dbReference>
<dbReference type="PANTHER" id="PTHR32017">
    <property type="entry name" value="SPINDLE AND KINETOCHORE-ASSOCIATED PROTEIN 2"/>
    <property type="match status" value="1"/>
</dbReference>
<dbReference type="PANTHER" id="PTHR32017:SF3">
    <property type="entry name" value="SPINDLE AND KINETOCHORE-ASSOCIATED PROTEIN 2"/>
    <property type="match status" value="1"/>
</dbReference>
<dbReference type="Pfam" id="PF16740">
    <property type="entry name" value="SKA2"/>
    <property type="match status" value="1"/>
</dbReference>
<proteinExistence type="evidence at protein level"/>
<protein>
    <recommendedName>
        <fullName evidence="3">SKA complex subunit 2</fullName>
    </recommendedName>
    <alternativeName>
        <fullName>Protein FAM33A</fullName>
    </alternativeName>
    <alternativeName>
        <fullName>Spindle and kinetochore-associated protein 2</fullName>
    </alternativeName>
</protein>
<name>SKA2_MOUSE</name>
<sequence>MEAEVDKLELMFQKADSDLDYLQYRLEYEVKTNHPHSAGEKNAVTVLKELSAIKSRYQALCARFKAVSVEQKETKSCICATLNKTMTMIQELQKQTNLELTLLTEEEKAATEPLKSHMPD</sequence>
<evidence type="ECO:0000250" key="1">
    <source>
        <dbReference type="UniProtKB" id="Q8WVK7"/>
    </source>
</evidence>
<evidence type="ECO:0000269" key="2">
    <source>
    </source>
</evidence>
<evidence type="ECO:0000305" key="3"/>
<reference key="1">
    <citation type="journal article" date="2005" name="Science">
        <title>The transcriptional landscape of the mammalian genome.</title>
        <authorList>
            <person name="Carninci P."/>
            <person name="Kasukawa T."/>
            <person name="Katayama S."/>
            <person name="Gough J."/>
            <person name="Frith M.C."/>
            <person name="Maeda N."/>
            <person name="Oyama R."/>
            <person name="Ravasi T."/>
            <person name="Lenhard B."/>
            <person name="Wells C."/>
            <person name="Kodzius R."/>
            <person name="Shimokawa K."/>
            <person name="Bajic V.B."/>
            <person name="Brenner S.E."/>
            <person name="Batalov S."/>
            <person name="Forrest A.R."/>
            <person name="Zavolan M."/>
            <person name="Davis M.J."/>
            <person name="Wilming L.G."/>
            <person name="Aidinis V."/>
            <person name="Allen J.E."/>
            <person name="Ambesi-Impiombato A."/>
            <person name="Apweiler R."/>
            <person name="Aturaliya R.N."/>
            <person name="Bailey T.L."/>
            <person name="Bansal M."/>
            <person name="Baxter L."/>
            <person name="Beisel K.W."/>
            <person name="Bersano T."/>
            <person name="Bono H."/>
            <person name="Chalk A.M."/>
            <person name="Chiu K.P."/>
            <person name="Choudhary V."/>
            <person name="Christoffels A."/>
            <person name="Clutterbuck D.R."/>
            <person name="Crowe M.L."/>
            <person name="Dalla E."/>
            <person name="Dalrymple B.P."/>
            <person name="de Bono B."/>
            <person name="Della Gatta G."/>
            <person name="di Bernardo D."/>
            <person name="Down T."/>
            <person name="Engstrom P."/>
            <person name="Fagiolini M."/>
            <person name="Faulkner G."/>
            <person name="Fletcher C.F."/>
            <person name="Fukushima T."/>
            <person name="Furuno M."/>
            <person name="Futaki S."/>
            <person name="Gariboldi M."/>
            <person name="Georgii-Hemming P."/>
            <person name="Gingeras T.R."/>
            <person name="Gojobori T."/>
            <person name="Green R.E."/>
            <person name="Gustincich S."/>
            <person name="Harbers M."/>
            <person name="Hayashi Y."/>
            <person name="Hensch T.K."/>
            <person name="Hirokawa N."/>
            <person name="Hill D."/>
            <person name="Huminiecki L."/>
            <person name="Iacono M."/>
            <person name="Ikeo K."/>
            <person name="Iwama A."/>
            <person name="Ishikawa T."/>
            <person name="Jakt M."/>
            <person name="Kanapin A."/>
            <person name="Katoh M."/>
            <person name="Kawasawa Y."/>
            <person name="Kelso J."/>
            <person name="Kitamura H."/>
            <person name="Kitano H."/>
            <person name="Kollias G."/>
            <person name="Krishnan S.P."/>
            <person name="Kruger A."/>
            <person name="Kummerfeld S.K."/>
            <person name="Kurochkin I.V."/>
            <person name="Lareau L.F."/>
            <person name="Lazarevic D."/>
            <person name="Lipovich L."/>
            <person name="Liu J."/>
            <person name="Liuni S."/>
            <person name="McWilliam S."/>
            <person name="Madan Babu M."/>
            <person name="Madera M."/>
            <person name="Marchionni L."/>
            <person name="Matsuda H."/>
            <person name="Matsuzawa S."/>
            <person name="Miki H."/>
            <person name="Mignone F."/>
            <person name="Miyake S."/>
            <person name="Morris K."/>
            <person name="Mottagui-Tabar S."/>
            <person name="Mulder N."/>
            <person name="Nakano N."/>
            <person name="Nakauchi H."/>
            <person name="Ng P."/>
            <person name="Nilsson R."/>
            <person name="Nishiguchi S."/>
            <person name="Nishikawa S."/>
            <person name="Nori F."/>
            <person name="Ohara O."/>
            <person name="Okazaki Y."/>
            <person name="Orlando V."/>
            <person name="Pang K.C."/>
            <person name="Pavan W.J."/>
            <person name="Pavesi G."/>
            <person name="Pesole G."/>
            <person name="Petrovsky N."/>
            <person name="Piazza S."/>
            <person name="Reed J."/>
            <person name="Reid J.F."/>
            <person name="Ring B.Z."/>
            <person name="Ringwald M."/>
            <person name="Rost B."/>
            <person name="Ruan Y."/>
            <person name="Salzberg S.L."/>
            <person name="Sandelin A."/>
            <person name="Schneider C."/>
            <person name="Schoenbach C."/>
            <person name="Sekiguchi K."/>
            <person name="Semple C.A."/>
            <person name="Seno S."/>
            <person name="Sessa L."/>
            <person name="Sheng Y."/>
            <person name="Shibata Y."/>
            <person name="Shimada H."/>
            <person name="Shimada K."/>
            <person name="Silva D."/>
            <person name="Sinclair B."/>
            <person name="Sperling S."/>
            <person name="Stupka E."/>
            <person name="Sugiura K."/>
            <person name="Sultana R."/>
            <person name="Takenaka Y."/>
            <person name="Taki K."/>
            <person name="Tammoja K."/>
            <person name="Tan S.L."/>
            <person name="Tang S."/>
            <person name="Taylor M.S."/>
            <person name="Tegner J."/>
            <person name="Teichmann S.A."/>
            <person name="Ueda H.R."/>
            <person name="van Nimwegen E."/>
            <person name="Verardo R."/>
            <person name="Wei C.L."/>
            <person name="Yagi K."/>
            <person name="Yamanishi H."/>
            <person name="Zabarovsky E."/>
            <person name="Zhu S."/>
            <person name="Zimmer A."/>
            <person name="Hide W."/>
            <person name="Bult C."/>
            <person name="Grimmond S.M."/>
            <person name="Teasdale R.D."/>
            <person name="Liu E.T."/>
            <person name="Brusic V."/>
            <person name="Quackenbush J."/>
            <person name="Wahlestedt C."/>
            <person name="Mattick J.S."/>
            <person name="Hume D.A."/>
            <person name="Kai C."/>
            <person name="Sasaki D."/>
            <person name="Tomaru Y."/>
            <person name="Fukuda S."/>
            <person name="Kanamori-Katayama M."/>
            <person name="Suzuki M."/>
            <person name="Aoki J."/>
            <person name="Arakawa T."/>
            <person name="Iida J."/>
            <person name="Imamura K."/>
            <person name="Itoh M."/>
            <person name="Kato T."/>
            <person name="Kawaji H."/>
            <person name="Kawagashira N."/>
            <person name="Kawashima T."/>
            <person name="Kojima M."/>
            <person name="Kondo S."/>
            <person name="Konno H."/>
            <person name="Nakano K."/>
            <person name="Ninomiya N."/>
            <person name="Nishio T."/>
            <person name="Okada M."/>
            <person name="Plessy C."/>
            <person name="Shibata K."/>
            <person name="Shiraki T."/>
            <person name="Suzuki S."/>
            <person name="Tagami M."/>
            <person name="Waki K."/>
            <person name="Watahiki A."/>
            <person name="Okamura-Oho Y."/>
            <person name="Suzuki H."/>
            <person name="Kawai J."/>
            <person name="Hayashizaki Y."/>
        </authorList>
    </citation>
    <scope>NUCLEOTIDE SEQUENCE [LARGE SCALE MRNA]</scope>
    <source>
        <strain>C57BL/6J</strain>
        <tissue>Bone</tissue>
    </source>
</reference>
<reference key="2">
    <citation type="journal article" date="2009" name="PLoS Biol.">
        <title>Lineage-specific biology revealed by a finished genome assembly of the mouse.</title>
        <authorList>
            <person name="Church D.M."/>
            <person name="Goodstadt L."/>
            <person name="Hillier L.W."/>
            <person name="Zody M.C."/>
            <person name="Goldstein S."/>
            <person name="She X."/>
            <person name="Bult C.J."/>
            <person name="Agarwala R."/>
            <person name="Cherry J.L."/>
            <person name="DiCuccio M."/>
            <person name="Hlavina W."/>
            <person name="Kapustin Y."/>
            <person name="Meric P."/>
            <person name="Maglott D."/>
            <person name="Birtle Z."/>
            <person name="Marques A.C."/>
            <person name="Graves T."/>
            <person name="Zhou S."/>
            <person name="Teague B."/>
            <person name="Potamousis K."/>
            <person name="Churas C."/>
            <person name="Place M."/>
            <person name="Herschleb J."/>
            <person name="Runnheim R."/>
            <person name="Forrest D."/>
            <person name="Amos-Landgraf J."/>
            <person name="Schwartz D.C."/>
            <person name="Cheng Z."/>
            <person name="Lindblad-Toh K."/>
            <person name="Eichler E.E."/>
            <person name="Ponting C.P."/>
        </authorList>
    </citation>
    <scope>NUCLEOTIDE SEQUENCE [LARGE SCALE GENOMIC DNA]</scope>
    <source>
        <strain>C57BL/6J</strain>
    </source>
</reference>
<reference key="3">
    <citation type="submission" date="2005-07" db="EMBL/GenBank/DDBJ databases">
        <authorList>
            <person name="Mural R.J."/>
            <person name="Adams M.D."/>
            <person name="Myers E.W."/>
            <person name="Smith H.O."/>
            <person name="Venter J.C."/>
        </authorList>
    </citation>
    <scope>NUCLEOTIDE SEQUENCE [LARGE SCALE GENOMIC DNA]</scope>
</reference>
<reference key="4">
    <citation type="journal article" date="2004" name="Genome Res.">
        <title>The status, quality, and expansion of the NIH full-length cDNA project: the Mammalian Gene Collection (MGC).</title>
        <authorList>
            <consortium name="The MGC Project Team"/>
        </authorList>
    </citation>
    <scope>NUCLEOTIDE SEQUENCE [LARGE SCALE MRNA]</scope>
    <source>
        <tissue>Brain</tissue>
    </source>
</reference>
<reference key="5">
    <citation type="journal article" date="2010" name="Cell">
        <title>A tissue-specific atlas of mouse protein phosphorylation and expression.</title>
        <authorList>
            <person name="Huttlin E.L."/>
            <person name="Jedrychowski M.P."/>
            <person name="Elias J.E."/>
            <person name="Goswami T."/>
            <person name="Rad R."/>
            <person name="Beausoleil S.A."/>
            <person name="Villen J."/>
            <person name="Haas W."/>
            <person name="Sowa M.E."/>
            <person name="Gygi S.P."/>
        </authorList>
    </citation>
    <scope>IDENTIFICATION BY MASS SPECTROMETRY [LARGE SCALE ANALYSIS]</scope>
    <source>
        <tissue>Testis</tissue>
    </source>
</reference>
<reference key="6">
    <citation type="journal article" date="2012" name="Cell Cycle">
        <title>Localization and function of the Ska complex during mouse oocyte meiotic maturation.</title>
        <authorList>
            <person name="Zhang Q.H."/>
            <person name="Qi S.T."/>
            <person name="Wang Z.B."/>
            <person name="Yang C.R."/>
            <person name="Wei Y.C."/>
            <person name="Chen L."/>
            <person name="Ouyang Y.C."/>
            <person name="Hou Y."/>
            <person name="Schatten H."/>
            <person name="Sun Q.Y."/>
        </authorList>
    </citation>
    <scope>FUNCTION</scope>
    <scope>SUBCELLULAR LOCATION</scope>
</reference>
<comment type="function">
    <text evidence="1 2">Component of the SKA complex, a microtubule plus end-binding complex of the outer kinetochore that stabilizes spindle microtubule-kinetochore attachments, promotes alignment of chromosomes at the mitotic spindle equator (chromosome congression) and assists suppression of the spindle assembly checkpoint. Kinetochores, consisting of a centromere-associated inner segment and a microtubule-contacting outer segment, play a crucial role in chromosome segregation by mediating the physical connection between centromeric DNA and spindle microtubules. The outer kinetochore is made up of the ten-subunit KMN network complex, comprising the MIS12, NDC80 and KNL1 complexes, and auxiliary microtubule-associated components such as the SKA complex; together they connect the outer kinetochore with the inner kinetochore, bind microtubules, and mediate interactions with mitotic checkpoint proteins that delay anaphase until chromosomes are bioriented on the spindle. The SKA complex is loaded onto bioriented kinetochores and it facilitates chromosome congression by stabilizing microtubules together with MAPRE1, and end-on attachment of the NDC80 complex to depolymerizing spindle microtubules, thereby assisting the poleward-moving kinetochore in withstanding microtubule pulling forces. The complex associates with dynamic microtubule plus-ends and can track both depolymerizing and elongating microtubules. The complex recruits protein phosphatase 1 (PP1) to the kinetochore in prometaphase and metaphase, to oppose spindle assembly checkpoint signaling and promote the onset of anaphase. Binds directly to microtubules; but with a much lower affinity than SKA1 (By similarity). During meiosis the SKA complex stabilizes the meiotic spindle and is required for its migration to the cortex (PubMed:22336914).</text>
</comment>
<comment type="subunit">
    <text evidence="1">Component of the SKA complex, composed of SKA1, SKA2 and SKA3. The SKA complex is a homodimer organized around a central W-shaped coiled-coil structure, formed by the interacting domains of SKA1, SKA2, and SKA3, each end of the 'W' is extended further by the C-terminal microtubule-binding domains of SKA1 and SKA3; the complex forms extended structures on microtubules. May interact with NR3C1; the relevance of such interaction remains unclear in vivo. Interacts with the MIS12 complex subunit DSN1. Interacts with the NDC80 complex; the interaction is required to establish kinetochore-microtubule end-on attachments.</text>
</comment>
<comment type="subcellular location">
    <subcellularLocation>
        <location evidence="1">Cytoplasm</location>
        <location evidence="1">Cytoskeleton</location>
        <location evidence="1">Spindle</location>
    </subcellularLocation>
    <subcellularLocation>
        <location evidence="1">Chromosome</location>
        <location evidence="1">Centromere</location>
        <location evidence="1">Kinetochore</location>
    </subcellularLocation>
    <subcellularLocation>
        <location evidence="1">Cytoplasm</location>
        <location evidence="1">Cytoskeleton</location>
        <location evidence="1">Microtubule organizing center</location>
        <location evidence="1">Centrosome</location>
    </subcellularLocation>
    <text evidence="1 2">Localizes to bioriented kinetochores and spindle microtubules during prometaphase and metaphase in a NDC80 complex-dependent manner (By similarity). The SKA complex begins to concentrate at kinetochores before microtubule attachment but reaches maximum levels on bioriented metaphase chromosomes (By similarity). Localizes both to microtubule plus-ends and along the length of microtubules (By similarity). The localization of the SKA complex to kinetochores is positively regulated by protein serine/threonine kinase CDK1 (By similarity). The localization of the SKA complex to kinetochores is negatively regulated by protein serine/threonine kinase AURKB, and this action is opposed directly or indirectly by the PP1 and PP2A protein phosphatase complexes (By similarity). Localizes at the centrosome during interphase and prophase (By similarity). Localizes to the meiotic spindle, but not to kinetochores, from the stage of germinal vesicle breakdown (GVBD) to meiosis II (MII) (PubMed:22336914).</text>
</comment>
<comment type="similarity">
    <text evidence="3">Belongs to the SKA2 family.</text>
</comment>